<evidence type="ECO:0000250" key="1">
    <source>
        <dbReference type="UniProtKB" id="Q27049"/>
    </source>
</evidence>
<evidence type="ECO:0000255" key="2"/>
<evidence type="ECO:0000269" key="3">
    <source>
    </source>
</evidence>
<evidence type="ECO:0000303" key="4">
    <source>
    </source>
</evidence>
<evidence type="ECO:0000305" key="5"/>
<evidence type="ECO:0000305" key="6">
    <source>
    </source>
</evidence>
<dbReference type="EMBL" id="AF179004">
    <property type="protein sequence ID" value="AAF07903.2"/>
    <property type="molecule type" value="mRNA"/>
</dbReference>
<dbReference type="Allergome" id="3509">
    <property type="allergen name" value="Tria p 1.0101"/>
</dbReference>
<dbReference type="Allergome" id="998">
    <property type="allergen name" value="Tria p 1"/>
</dbReference>
<dbReference type="GO" id="GO:0005576">
    <property type="term" value="C:extracellular region"/>
    <property type="evidence" value="ECO:0007669"/>
    <property type="project" value="UniProtKB-SubCell"/>
</dbReference>
<dbReference type="GO" id="GO:0030682">
    <property type="term" value="P:symbiont-mediated perturbation of host defenses"/>
    <property type="evidence" value="ECO:0007669"/>
    <property type="project" value="InterPro"/>
</dbReference>
<dbReference type="CDD" id="cd19423">
    <property type="entry name" value="lipocalin_LTBP1-like"/>
    <property type="match status" value="1"/>
</dbReference>
<dbReference type="Gene3D" id="2.40.128.20">
    <property type="match status" value="1"/>
</dbReference>
<dbReference type="InterPro" id="IPR012674">
    <property type="entry name" value="Calycin"/>
</dbReference>
<dbReference type="InterPro" id="IPR005657">
    <property type="entry name" value="Triabi/Procalin"/>
</dbReference>
<dbReference type="Pfam" id="PF03973">
    <property type="entry name" value="Triabin"/>
    <property type="match status" value="1"/>
</dbReference>
<dbReference type="SUPFAM" id="SSF50814">
    <property type="entry name" value="Lipocalins"/>
    <property type="match status" value="1"/>
</dbReference>
<feature type="signal peptide" evidence="2">
    <location>
        <begin position="1"/>
        <end position="18"/>
    </location>
</feature>
<feature type="chain" id="PRO_0000017995" description="Procalin" evidence="6">
    <location>
        <begin position="19"/>
        <end position="169"/>
    </location>
</feature>
<feature type="disulfide bond" evidence="1">
    <location>
        <begin position="21"/>
        <end position="125"/>
    </location>
</feature>
<feature type="disulfide bond" evidence="1">
    <location>
        <begin position="54"/>
        <end position="168"/>
    </location>
</feature>
<feature type="disulfide bond" evidence="1">
    <location>
        <begin position="83"/>
        <end position="97"/>
    </location>
</feature>
<keyword id="KW-0020">Allergen</keyword>
<keyword id="KW-1015">Disulfide bond</keyword>
<keyword id="KW-0964">Secreted</keyword>
<keyword id="KW-0732">Signal</keyword>
<organism>
    <name type="scientific">Hospesneotomae protracta</name>
    <name type="common">Western bloodsucking conenose</name>
    <name type="synonym">Triatoma protracta</name>
    <dbReference type="NCBI Taxonomy" id="72493"/>
    <lineage>
        <taxon>Eukaryota</taxon>
        <taxon>Metazoa</taxon>
        <taxon>Ecdysozoa</taxon>
        <taxon>Arthropoda</taxon>
        <taxon>Hexapoda</taxon>
        <taxon>Insecta</taxon>
        <taxon>Pterygota</taxon>
        <taxon>Neoptera</taxon>
        <taxon>Paraneoptera</taxon>
        <taxon>Hemiptera</taxon>
        <taxon>Heteroptera</taxon>
        <taxon>Panheteroptera</taxon>
        <taxon>Cimicomorpha</taxon>
        <taxon>Reduviidae</taxon>
        <taxon>Triatominae</taxon>
        <taxon>Hospesneotomae</taxon>
    </lineage>
</organism>
<comment type="subcellular location">
    <subcellularLocation>
        <location evidence="6">Secreted</location>
    </subcellularLocation>
</comment>
<comment type="tissue specificity">
    <text evidence="6">Expressed in salivary glands.</text>
</comment>
<comment type="allergen">
    <text evidence="3">Causes an allergic reaction in human. Major salivary antigen. The insect feeds on mammalian blood; piercing the lips, eyelids or ears of a sleeping victim. The problem is that the feeding process can cause anaphylactic shock.</text>
</comment>
<comment type="similarity">
    <text evidence="5">Belongs to the calycin superfamily. Triabin family.</text>
</comment>
<accession>Q9U6R6</accession>
<name>PRCLN_HOSPR</name>
<proteinExistence type="evidence at protein level"/>
<protein>
    <recommendedName>
        <fullName evidence="4">Procalin</fullName>
    </recommendedName>
    <allergenName evidence="5">Tria p 1</allergenName>
</protein>
<sequence length="169" mass="19077">MKTFIVITFIGILSYAYADECENPEPMQGFSASQFYQGXWYVTHETSAXTLSECNILTTSNDNGKFTVKHKYTKDGXVGELICEGQASANNKFTYDCKFXGZTMEQVTRTAMDTDYNDYALYYLCTTYKXGPNAGKKEGHYILSRRQPNTEIPDALKTKTKDLNLKLCG</sequence>
<reference key="1">
    <citation type="journal article" date="2001" name="J. Immunol.">
        <title>Identification, cloning, and recombinant expression of procalin, a major triatomine allergen.</title>
        <authorList>
            <person name="Paddock C.D."/>
            <person name="McKerrow J.H."/>
            <person name="Hansell E."/>
            <person name="Foreman K.W."/>
            <person name="Hsieh I."/>
            <person name="Marshall N."/>
        </authorList>
    </citation>
    <scope>NUCLEOTIDE SEQUENCE [MRNA]</scope>
    <scope>ALLERGEN</scope>
    <source>
        <tissue>Salivary gland</tissue>
    </source>
</reference>